<dbReference type="EC" id="3.6.-.-" evidence="1"/>
<dbReference type="EMBL" id="CP000736">
    <property type="protein sequence ID" value="ABR53613.1"/>
    <property type="molecule type" value="Genomic_DNA"/>
</dbReference>
<dbReference type="SMR" id="A6U595"/>
<dbReference type="KEGG" id="sah:SaurJH1_2791"/>
<dbReference type="HOGENOM" id="CLU_019624_4_1_9"/>
<dbReference type="GO" id="GO:0005829">
    <property type="term" value="C:cytosol"/>
    <property type="evidence" value="ECO:0007669"/>
    <property type="project" value="TreeGrafter"/>
</dbReference>
<dbReference type="GO" id="GO:0005525">
    <property type="term" value="F:GTP binding"/>
    <property type="evidence" value="ECO:0007669"/>
    <property type="project" value="UniProtKB-UniRule"/>
</dbReference>
<dbReference type="GO" id="GO:0003924">
    <property type="term" value="F:GTPase activity"/>
    <property type="evidence" value="ECO:0007669"/>
    <property type="project" value="UniProtKB-UniRule"/>
</dbReference>
<dbReference type="GO" id="GO:0046872">
    <property type="term" value="F:metal ion binding"/>
    <property type="evidence" value="ECO:0007669"/>
    <property type="project" value="UniProtKB-KW"/>
</dbReference>
<dbReference type="GO" id="GO:0030488">
    <property type="term" value="P:tRNA methylation"/>
    <property type="evidence" value="ECO:0007669"/>
    <property type="project" value="TreeGrafter"/>
</dbReference>
<dbReference type="GO" id="GO:0002098">
    <property type="term" value="P:tRNA wobble uridine modification"/>
    <property type="evidence" value="ECO:0007669"/>
    <property type="project" value="TreeGrafter"/>
</dbReference>
<dbReference type="CDD" id="cd04164">
    <property type="entry name" value="trmE"/>
    <property type="match status" value="1"/>
</dbReference>
<dbReference type="CDD" id="cd14858">
    <property type="entry name" value="TrmE_N"/>
    <property type="match status" value="1"/>
</dbReference>
<dbReference type="FunFam" id="3.30.1360.120:FF:000003">
    <property type="entry name" value="tRNA modification GTPase MnmE"/>
    <property type="match status" value="1"/>
</dbReference>
<dbReference type="FunFam" id="3.40.50.300:FF:000494">
    <property type="entry name" value="tRNA modification GTPase MnmE"/>
    <property type="match status" value="1"/>
</dbReference>
<dbReference type="Gene3D" id="3.40.50.300">
    <property type="entry name" value="P-loop containing nucleotide triphosphate hydrolases"/>
    <property type="match status" value="1"/>
</dbReference>
<dbReference type="Gene3D" id="3.30.1360.120">
    <property type="entry name" value="Probable tRNA modification gtpase trme, domain 1"/>
    <property type="match status" value="1"/>
</dbReference>
<dbReference type="Gene3D" id="1.20.120.430">
    <property type="entry name" value="tRNA modification GTPase MnmE domain 2"/>
    <property type="match status" value="1"/>
</dbReference>
<dbReference type="HAMAP" id="MF_00379">
    <property type="entry name" value="GTPase_MnmE"/>
    <property type="match status" value="1"/>
</dbReference>
<dbReference type="InterPro" id="IPR031168">
    <property type="entry name" value="G_TrmE"/>
</dbReference>
<dbReference type="InterPro" id="IPR006073">
    <property type="entry name" value="GTP-bd"/>
</dbReference>
<dbReference type="InterPro" id="IPR018948">
    <property type="entry name" value="GTP-bd_TrmE_N"/>
</dbReference>
<dbReference type="InterPro" id="IPR004520">
    <property type="entry name" value="GTPase_MnmE"/>
</dbReference>
<dbReference type="InterPro" id="IPR027368">
    <property type="entry name" value="MnmE_dom2"/>
</dbReference>
<dbReference type="InterPro" id="IPR025867">
    <property type="entry name" value="MnmE_helical"/>
</dbReference>
<dbReference type="InterPro" id="IPR027417">
    <property type="entry name" value="P-loop_NTPase"/>
</dbReference>
<dbReference type="InterPro" id="IPR005225">
    <property type="entry name" value="Small_GTP-bd"/>
</dbReference>
<dbReference type="InterPro" id="IPR027266">
    <property type="entry name" value="TrmE/GcvT_dom1"/>
</dbReference>
<dbReference type="NCBIfam" id="TIGR00450">
    <property type="entry name" value="mnmE_trmE_thdF"/>
    <property type="match status" value="1"/>
</dbReference>
<dbReference type="NCBIfam" id="NF003661">
    <property type="entry name" value="PRK05291.1-3"/>
    <property type="match status" value="1"/>
</dbReference>
<dbReference type="NCBIfam" id="TIGR00231">
    <property type="entry name" value="small_GTP"/>
    <property type="match status" value="1"/>
</dbReference>
<dbReference type="PANTHER" id="PTHR42714">
    <property type="entry name" value="TRNA MODIFICATION GTPASE GTPBP3"/>
    <property type="match status" value="1"/>
</dbReference>
<dbReference type="PANTHER" id="PTHR42714:SF2">
    <property type="entry name" value="TRNA MODIFICATION GTPASE GTPBP3, MITOCHONDRIAL"/>
    <property type="match status" value="1"/>
</dbReference>
<dbReference type="Pfam" id="PF01926">
    <property type="entry name" value="MMR_HSR1"/>
    <property type="match status" value="1"/>
</dbReference>
<dbReference type="Pfam" id="PF12631">
    <property type="entry name" value="MnmE_helical"/>
    <property type="match status" value="1"/>
</dbReference>
<dbReference type="Pfam" id="PF10396">
    <property type="entry name" value="TrmE_N"/>
    <property type="match status" value="1"/>
</dbReference>
<dbReference type="PRINTS" id="PR00449">
    <property type="entry name" value="RASTRNSFRMNG"/>
</dbReference>
<dbReference type="SUPFAM" id="SSF52540">
    <property type="entry name" value="P-loop containing nucleoside triphosphate hydrolases"/>
    <property type="match status" value="1"/>
</dbReference>
<dbReference type="SUPFAM" id="SSF116878">
    <property type="entry name" value="TrmE connector domain"/>
    <property type="match status" value="1"/>
</dbReference>
<dbReference type="PROSITE" id="PS51709">
    <property type="entry name" value="G_TRME"/>
    <property type="match status" value="1"/>
</dbReference>
<accession>A6U595</accession>
<reference key="1">
    <citation type="submission" date="2007-06" db="EMBL/GenBank/DDBJ databases">
        <title>Complete sequence of chromosome of Staphylococcus aureus subsp. aureus JH1.</title>
        <authorList>
            <consortium name="US DOE Joint Genome Institute"/>
            <person name="Copeland A."/>
            <person name="Lucas S."/>
            <person name="Lapidus A."/>
            <person name="Barry K."/>
            <person name="Detter J.C."/>
            <person name="Glavina del Rio T."/>
            <person name="Hammon N."/>
            <person name="Israni S."/>
            <person name="Dalin E."/>
            <person name="Tice H."/>
            <person name="Pitluck S."/>
            <person name="Chain P."/>
            <person name="Malfatti S."/>
            <person name="Shin M."/>
            <person name="Vergez L."/>
            <person name="Schmutz J."/>
            <person name="Larimer F."/>
            <person name="Land M."/>
            <person name="Hauser L."/>
            <person name="Kyrpides N."/>
            <person name="Ivanova N."/>
            <person name="Tomasz A."/>
            <person name="Richardson P."/>
        </authorList>
    </citation>
    <scope>NUCLEOTIDE SEQUENCE [LARGE SCALE GENOMIC DNA]</scope>
    <source>
        <strain>JH1</strain>
    </source>
</reference>
<keyword id="KW-0963">Cytoplasm</keyword>
<keyword id="KW-0342">GTP-binding</keyword>
<keyword id="KW-0378">Hydrolase</keyword>
<keyword id="KW-0460">Magnesium</keyword>
<keyword id="KW-0479">Metal-binding</keyword>
<keyword id="KW-0547">Nucleotide-binding</keyword>
<keyword id="KW-0630">Potassium</keyword>
<keyword id="KW-0819">tRNA processing</keyword>
<feature type="chain" id="PRO_1000080017" description="tRNA modification GTPase MnmE">
    <location>
        <begin position="1"/>
        <end position="459"/>
    </location>
</feature>
<feature type="domain" description="TrmE-type G">
    <location>
        <begin position="221"/>
        <end position="380"/>
    </location>
</feature>
<feature type="binding site" evidence="1">
    <location>
        <position position="22"/>
    </location>
    <ligand>
        <name>(6S)-5-formyl-5,6,7,8-tetrahydrofolate</name>
        <dbReference type="ChEBI" id="CHEBI:57457"/>
    </ligand>
</feature>
<feature type="binding site" evidence="1">
    <location>
        <position position="85"/>
    </location>
    <ligand>
        <name>(6S)-5-formyl-5,6,7,8-tetrahydrofolate</name>
        <dbReference type="ChEBI" id="CHEBI:57457"/>
    </ligand>
</feature>
<feature type="binding site" evidence="1">
    <location>
        <position position="124"/>
    </location>
    <ligand>
        <name>(6S)-5-formyl-5,6,7,8-tetrahydrofolate</name>
        <dbReference type="ChEBI" id="CHEBI:57457"/>
    </ligand>
</feature>
<feature type="binding site" evidence="1">
    <location>
        <begin position="231"/>
        <end position="236"/>
    </location>
    <ligand>
        <name>GTP</name>
        <dbReference type="ChEBI" id="CHEBI:37565"/>
    </ligand>
</feature>
<feature type="binding site" evidence="1">
    <location>
        <position position="231"/>
    </location>
    <ligand>
        <name>K(+)</name>
        <dbReference type="ChEBI" id="CHEBI:29103"/>
    </ligand>
</feature>
<feature type="binding site" evidence="1">
    <location>
        <position position="235"/>
    </location>
    <ligand>
        <name>Mg(2+)</name>
        <dbReference type="ChEBI" id="CHEBI:18420"/>
    </ligand>
</feature>
<feature type="binding site" evidence="1">
    <location>
        <begin position="250"/>
        <end position="256"/>
    </location>
    <ligand>
        <name>GTP</name>
        <dbReference type="ChEBI" id="CHEBI:37565"/>
    </ligand>
</feature>
<feature type="binding site" evidence="1">
    <location>
        <position position="250"/>
    </location>
    <ligand>
        <name>K(+)</name>
        <dbReference type="ChEBI" id="CHEBI:29103"/>
    </ligand>
</feature>
<feature type="binding site" evidence="1">
    <location>
        <position position="252"/>
    </location>
    <ligand>
        <name>K(+)</name>
        <dbReference type="ChEBI" id="CHEBI:29103"/>
    </ligand>
</feature>
<feature type="binding site" evidence="1">
    <location>
        <position position="255"/>
    </location>
    <ligand>
        <name>K(+)</name>
        <dbReference type="ChEBI" id="CHEBI:29103"/>
    </ligand>
</feature>
<feature type="binding site" evidence="1">
    <location>
        <position position="256"/>
    </location>
    <ligand>
        <name>Mg(2+)</name>
        <dbReference type="ChEBI" id="CHEBI:18420"/>
    </ligand>
</feature>
<feature type="binding site" evidence="1">
    <location>
        <begin position="275"/>
        <end position="278"/>
    </location>
    <ligand>
        <name>GTP</name>
        <dbReference type="ChEBI" id="CHEBI:37565"/>
    </ligand>
</feature>
<feature type="binding site" evidence="1">
    <location>
        <position position="459"/>
    </location>
    <ligand>
        <name>(6S)-5-formyl-5,6,7,8-tetrahydrofolate</name>
        <dbReference type="ChEBI" id="CHEBI:57457"/>
    </ligand>
</feature>
<sequence length="459" mass="51341">MDLDTITSISTPMGEGAIGIVRLSGPQAVEIADKLYKGKHLLNDVPSHTINYGHIIDPESKEVVEEVMVSVLRAPKTFTREDIIEINCHGGILTINRVLELTMTYGARMAEPGEFTKRAFLNGRIDLSQAEAVMDFIRSKTDRASKVAMNQIEGRLSDLIKKQRQSILEILAQVEVNIDYPEYDDVEDATTEFLLEQSKEIKQEINRLLDTGAQGKIMREGLSTVIVGKPNVGKSSMLNNLIQDNKAIVTEVAGTTRDVLEEYVNVRGVPLRLVDTAGIRETEDIVEKIGVERSRKALSQADLILFVLNNNEALTQEDYTLYEVVKNEDVIVIVNKMDLEQNIDINEVKDMIGDTPLIQTSMLKQEGIDELEIQIRDLFFGGEVQNQDMTYVSNSRHISLLKQARQTIQDAIDAAESGVPMDMVQIDLTRTWEILGEIIGETASDELIDQLFSQFCLGK</sequence>
<comment type="function">
    <text evidence="1">Exhibits a very high intrinsic GTPase hydrolysis rate. Involved in the addition of a carboxymethylaminomethyl (cmnm) group at the wobble position (U34) of certain tRNAs, forming tRNA-cmnm(5)s(2)U34.</text>
</comment>
<comment type="cofactor">
    <cofactor evidence="1">
        <name>K(+)</name>
        <dbReference type="ChEBI" id="CHEBI:29103"/>
    </cofactor>
    <text evidence="1">Binds 1 potassium ion per subunit.</text>
</comment>
<comment type="subunit">
    <text evidence="1">Homodimer. Heterotetramer of two MnmE and two MnmG subunits.</text>
</comment>
<comment type="subcellular location">
    <subcellularLocation>
        <location evidence="1">Cytoplasm</location>
    </subcellularLocation>
</comment>
<comment type="similarity">
    <text evidence="1">Belongs to the TRAFAC class TrmE-Era-EngA-EngB-Septin-like GTPase superfamily. TrmE GTPase family.</text>
</comment>
<name>MNME_STAA2</name>
<organism>
    <name type="scientific">Staphylococcus aureus (strain JH1)</name>
    <dbReference type="NCBI Taxonomy" id="359787"/>
    <lineage>
        <taxon>Bacteria</taxon>
        <taxon>Bacillati</taxon>
        <taxon>Bacillota</taxon>
        <taxon>Bacilli</taxon>
        <taxon>Bacillales</taxon>
        <taxon>Staphylococcaceae</taxon>
        <taxon>Staphylococcus</taxon>
    </lineage>
</organism>
<protein>
    <recommendedName>
        <fullName evidence="1">tRNA modification GTPase MnmE</fullName>
        <ecNumber evidence="1">3.6.-.-</ecNumber>
    </recommendedName>
</protein>
<gene>
    <name evidence="1" type="primary">mnmE</name>
    <name evidence="1" type="synonym">trmE</name>
    <name type="ordered locus">SaurJH1_2791</name>
</gene>
<proteinExistence type="inferred from homology"/>
<evidence type="ECO:0000255" key="1">
    <source>
        <dbReference type="HAMAP-Rule" id="MF_00379"/>
    </source>
</evidence>